<dbReference type="EMBL" id="AY849993">
    <property type="protein sequence ID" value="AAX51263.1"/>
    <property type="status" value="ALT_SEQ"/>
    <property type="molecule type" value="Genomic_DNA"/>
</dbReference>
<dbReference type="EMBL" id="AC002335">
    <property type="protein sequence ID" value="AAB64314.1"/>
    <property type="status" value="ALT_SEQ"/>
    <property type="molecule type" value="Genomic_DNA"/>
</dbReference>
<dbReference type="EMBL" id="CP002685">
    <property type="protein sequence ID" value="AEC10262.1"/>
    <property type="molecule type" value="Genomic_DNA"/>
</dbReference>
<dbReference type="EMBL" id="CP002685">
    <property type="protein sequence ID" value="AEC10263.1"/>
    <property type="molecule type" value="Genomic_DNA"/>
</dbReference>
<dbReference type="EMBL" id="CP002685">
    <property type="protein sequence ID" value="AEC10264.1"/>
    <property type="molecule type" value="Genomic_DNA"/>
</dbReference>
<dbReference type="EMBL" id="CP002685">
    <property type="protein sequence ID" value="AEC10265.1"/>
    <property type="molecule type" value="Genomic_DNA"/>
</dbReference>
<dbReference type="EMBL" id="CP002685">
    <property type="protein sequence ID" value="ANM61362.1"/>
    <property type="molecule type" value="Genomic_DNA"/>
</dbReference>
<dbReference type="EMBL" id="AY094463">
    <property type="protein sequence ID" value="AAM19833.1"/>
    <property type="molecule type" value="mRNA"/>
</dbReference>
<dbReference type="EMBL" id="BT003029">
    <property type="protein sequence ID" value="AAO23594.1"/>
    <property type="molecule type" value="mRNA"/>
</dbReference>
<dbReference type="EMBL" id="AK317032">
    <property type="protein sequence ID" value="BAH19726.1"/>
    <property type="molecule type" value="mRNA"/>
</dbReference>
<dbReference type="EMBL" id="AK318833">
    <property type="protein sequence ID" value="BAH56948.1"/>
    <property type="molecule type" value="mRNA"/>
</dbReference>
<dbReference type="RefSeq" id="NP_001078046.1">
    <molecule id="Q8LPQ9-1"/>
    <property type="nucleotide sequence ID" value="NM_001084577.2"/>
</dbReference>
<dbReference type="RefSeq" id="NP_001078047.1">
    <molecule id="Q8LPQ9-1"/>
    <property type="nucleotide sequence ID" value="NM_001084578.1"/>
</dbReference>
<dbReference type="RefSeq" id="NP_001078048.1">
    <molecule id="Q8LPQ9-1"/>
    <property type="nucleotide sequence ID" value="NM_001084579.2"/>
</dbReference>
<dbReference type="RefSeq" id="NP_001323585.1">
    <molecule id="Q8LPQ9-2"/>
    <property type="nucleotide sequence ID" value="NM_001337028.1"/>
</dbReference>
<dbReference type="RefSeq" id="NP_181869.2">
    <molecule id="Q8LPQ9-2"/>
    <property type="nucleotide sequence ID" value="NM_129902.3"/>
</dbReference>
<dbReference type="PDB" id="5KXF">
    <property type="method" value="X-ray"/>
    <property type="resolution" value="2.70 A"/>
    <property type="chains" value="A=433-565"/>
</dbReference>
<dbReference type="PDBsum" id="5KXF"/>
<dbReference type="SMR" id="Q8LPQ9"/>
<dbReference type="BioGRID" id="4278">
    <property type="interactions" value="5"/>
</dbReference>
<dbReference type="FunCoup" id="Q8LPQ9">
    <property type="interactions" value="1856"/>
</dbReference>
<dbReference type="IntAct" id="Q8LPQ9">
    <property type="interactions" value="3"/>
</dbReference>
<dbReference type="STRING" id="3702.Q8LPQ9"/>
<dbReference type="GlyGen" id="Q8LPQ9">
    <property type="glycosylation" value="1 site, 1 O-linked glycan (1 site)"/>
</dbReference>
<dbReference type="iPTMnet" id="Q8LPQ9"/>
<dbReference type="PaxDb" id="3702-AT2G43410.4"/>
<dbReference type="ProteomicsDB" id="230040">
    <molecule id="Q8LPQ9-1"/>
</dbReference>
<dbReference type="EnsemblPlants" id="AT2G43410.1">
    <molecule id="Q8LPQ9-2"/>
    <property type="protein sequence ID" value="AT2G43410.1"/>
    <property type="gene ID" value="AT2G43410"/>
</dbReference>
<dbReference type="EnsemblPlants" id="AT2G43410.2">
    <molecule id="Q8LPQ9-1"/>
    <property type="protein sequence ID" value="AT2G43410.2"/>
    <property type="gene ID" value="AT2G43410"/>
</dbReference>
<dbReference type="EnsemblPlants" id="AT2G43410.3">
    <molecule id="Q8LPQ9-1"/>
    <property type="protein sequence ID" value="AT2G43410.3"/>
    <property type="gene ID" value="AT2G43410"/>
</dbReference>
<dbReference type="EnsemblPlants" id="AT2G43410.4">
    <molecule id="Q8LPQ9-1"/>
    <property type="protein sequence ID" value="AT2G43410.4"/>
    <property type="gene ID" value="AT2G43410"/>
</dbReference>
<dbReference type="EnsemblPlants" id="AT2G43410.6">
    <molecule id="Q8LPQ9-2"/>
    <property type="protein sequence ID" value="AT2G43410.6"/>
    <property type="gene ID" value="AT2G43410"/>
</dbReference>
<dbReference type="GeneID" id="818942"/>
<dbReference type="Gramene" id="AT2G43410.1">
    <molecule id="Q8LPQ9-2"/>
    <property type="protein sequence ID" value="AT2G43410.1"/>
    <property type="gene ID" value="AT2G43410"/>
</dbReference>
<dbReference type="Gramene" id="AT2G43410.2">
    <molecule id="Q8LPQ9-1"/>
    <property type="protein sequence ID" value="AT2G43410.2"/>
    <property type="gene ID" value="AT2G43410"/>
</dbReference>
<dbReference type="Gramene" id="AT2G43410.3">
    <molecule id="Q8LPQ9-1"/>
    <property type="protein sequence ID" value="AT2G43410.3"/>
    <property type="gene ID" value="AT2G43410"/>
</dbReference>
<dbReference type="Gramene" id="AT2G43410.4">
    <molecule id="Q8LPQ9-1"/>
    <property type="protein sequence ID" value="AT2G43410.4"/>
    <property type="gene ID" value="AT2G43410"/>
</dbReference>
<dbReference type="Gramene" id="AT2G43410.6">
    <molecule id="Q8LPQ9-2"/>
    <property type="protein sequence ID" value="AT2G43410.6"/>
    <property type="gene ID" value="AT2G43410"/>
</dbReference>
<dbReference type="KEGG" id="ath:AT2G43410"/>
<dbReference type="Araport" id="AT2G43410"/>
<dbReference type="TAIR" id="AT2G43410">
    <property type="gene designation" value="FPA"/>
</dbReference>
<dbReference type="eggNOG" id="KOG0118">
    <property type="taxonomic scope" value="Eukaryota"/>
</dbReference>
<dbReference type="InParanoid" id="Q8LPQ9"/>
<dbReference type="OMA" id="DINHIPR"/>
<dbReference type="PhylomeDB" id="Q8LPQ9"/>
<dbReference type="PRO" id="PR:Q8LPQ9"/>
<dbReference type="Proteomes" id="UP000006548">
    <property type="component" value="Chromosome 2"/>
</dbReference>
<dbReference type="ExpressionAtlas" id="Q8LPQ9">
    <property type="expression patterns" value="baseline and differential"/>
</dbReference>
<dbReference type="GO" id="GO:0000785">
    <property type="term" value="C:chromatin"/>
    <property type="evidence" value="ECO:0000314"/>
    <property type="project" value="UniProtKB"/>
</dbReference>
<dbReference type="GO" id="GO:0005634">
    <property type="term" value="C:nucleus"/>
    <property type="evidence" value="ECO:0007669"/>
    <property type="project" value="UniProtKB-SubCell"/>
</dbReference>
<dbReference type="GO" id="GO:0003723">
    <property type="term" value="F:RNA binding"/>
    <property type="evidence" value="ECO:0000250"/>
    <property type="project" value="TAIR"/>
</dbReference>
<dbReference type="GO" id="GO:0030154">
    <property type="term" value="P:cell differentiation"/>
    <property type="evidence" value="ECO:0007669"/>
    <property type="project" value="UniProtKB-KW"/>
</dbReference>
<dbReference type="GO" id="GO:0009553">
    <property type="term" value="P:embryo sac development"/>
    <property type="evidence" value="ECO:0000316"/>
    <property type="project" value="TAIR"/>
</dbReference>
<dbReference type="GO" id="GO:0009908">
    <property type="term" value="P:flower development"/>
    <property type="evidence" value="ECO:0007669"/>
    <property type="project" value="UniProtKB-KW"/>
</dbReference>
<dbReference type="GO" id="GO:0009911">
    <property type="term" value="P:positive regulation of flower development"/>
    <property type="evidence" value="ECO:0000315"/>
    <property type="project" value="TAIR"/>
</dbReference>
<dbReference type="GO" id="GO:0031048">
    <property type="term" value="P:regulatory ncRNA-mediated heterochromatin formation"/>
    <property type="evidence" value="ECO:0000315"/>
    <property type="project" value="TAIR"/>
</dbReference>
<dbReference type="GO" id="GO:0010228">
    <property type="term" value="P:vegetative to reproductive phase transition of meristem"/>
    <property type="evidence" value="ECO:0000315"/>
    <property type="project" value="TAIR"/>
</dbReference>
<dbReference type="CDD" id="cd00590">
    <property type="entry name" value="RRM_SF"/>
    <property type="match status" value="1"/>
</dbReference>
<dbReference type="CDD" id="cd21520">
    <property type="entry name" value="SPOC_SF"/>
    <property type="match status" value="1"/>
</dbReference>
<dbReference type="FunFam" id="3.30.70.330:FF:000415">
    <property type="entry name" value="Flowering time control protein FPA"/>
    <property type="match status" value="1"/>
</dbReference>
<dbReference type="Gene3D" id="3.30.70.330">
    <property type="match status" value="3"/>
</dbReference>
<dbReference type="InterPro" id="IPR012677">
    <property type="entry name" value="Nucleotide-bd_a/b_plait_sf"/>
</dbReference>
<dbReference type="InterPro" id="IPR035979">
    <property type="entry name" value="RBD_domain_sf"/>
</dbReference>
<dbReference type="InterPro" id="IPR000504">
    <property type="entry name" value="RRM_dom"/>
</dbReference>
<dbReference type="InterPro" id="IPR012921">
    <property type="entry name" value="SPOC_C"/>
</dbReference>
<dbReference type="PANTHER" id="PTHR23189">
    <property type="entry name" value="RNA RECOGNITION MOTIF-CONTAINING"/>
    <property type="match status" value="1"/>
</dbReference>
<dbReference type="Pfam" id="PF00076">
    <property type="entry name" value="RRM_1"/>
    <property type="match status" value="3"/>
</dbReference>
<dbReference type="Pfam" id="PF07744">
    <property type="entry name" value="SPOC"/>
    <property type="match status" value="1"/>
</dbReference>
<dbReference type="SMART" id="SM00360">
    <property type="entry name" value="RRM"/>
    <property type="match status" value="3"/>
</dbReference>
<dbReference type="SUPFAM" id="SSF54928">
    <property type="entry name" value="RNA-binding domain, RBD"/>
    <property type="match status" value="3"/>
</dbReference>
<dbReference type="PROSITE" id="PS50102">
    <property type="entry name" value="RRM"/>
    <property type="match status" value="3"/>
</dbReference>
<feature type="chain" id="PRO_0000391778" description="Flowering time control protein FPA">
    <location>
        <begin position="1"/>
        <end position="901"/>
    </location>
</feature>
<feature type="domain" description="RRM 1" evidence="1">
    <location>
        <begin position="18"/>
        <end position="90"/>
    </location>
</feature>
<feature type="domain" description="RRM 2" evidence="1">
    <location>
        <begin position="95"/>
        <end position="166"/>
    </location>
</feature>
<feature type="domain" description="RRM 3" evidence="1">
    <location>
        <begin position="206"/>
        <end position="281"/>
    </location>
</feature>
<feature type="domain" description="SPOC">
    <location>
        <begin position="441"/>
        <end position="537"/>
    </location>
</feature>
<feature type="region of interest" description="Disordered" evidence="2">
    <location>
        <begin position="343"/>
        <end position="416"/>
    </location>
</feature>
<feature type="region of interest" description="Disordered" evidence="2">
    <location>
        <begin position="655"/>
        <end position="736"/>
    </location>
</feature>
<feature type="compositionally biased region" description="Polar residues" evidence="2">
    <location>
        <begin position="664"/>
        <end position="682"/>
    </location>
</feature>
<feature type="compositionally biased region" description="Polar residues" evidence="2">
    <location>
        <begin position="700"/>
        <end position="716"/>
    </location>
</feature>
<feature type="splice variant" id="VSP_038750" description="In isoform 3." evidence="6">
    <location>
        <begin position="1"/>
        <end position="324"/>
    </location>
</feature>
<feature type="splice variant" id="VSP_038751" description="In isoform 2." evidence="7">
    <location>
        <begin position="295"/>
        <end position="337"/>
    </location>
</feature>
<feature type="splice variant" id="VSP_038752" description="In isoform 3." evidence="6">
    <original>PLRGTNERSYNGAEYNDVVGKEPNWRR</original>
    <variation>MSCLLSKTILVFTLNTMTLLVRSQTGG</variation>
    <location>
        <begin position="325"/>
        <end position="351"/>
    </location>
</feature>
<feature type="sequence conflict" description="In Ref. 6; BAH19726." evidence="7" ref="6">
    <original>D</original>
    <variation>G</variation>
    <location>
        <position position="110"/>
    </location>
</feature>
<feature type="sequence conflict" description="In Ref. 6; BAH19726." evidence="7" ref="6">
    <original>E</original>
    <variation>G</variation>
    <location>
        <position position="282"/>
    </location>
</feature>
<feature type="sequence conflict" description="In Ref. 6; BAH19726." evidence="7" ref="6">
    <original>E</original>
    <variation>G</variation>
    <location>
        <position position="494"/>
    </location>
</feature>
<feature type="sequence conflict" description="In Ref. 6; BAH19726." evidence="7" ref="6">
    <original>H</original>
    <variation>P</variation>
    <location>
        <position position="663"/>
    </location>
</feature>
<feature type="sequence conflict" description="In Ref. 6; BAH19726." evidence="7" ref="6">
    <original>A</original>
    <variation>V</variation>
    <location>
        <position position="687"/>
    </location>
</feature>
<feature type="sequence conflict" description="In Ref. 5; AAM19833/AAO23594." evidence="7" ref="5">
    <original>Q</original>
    <variation>R</variation>
    <location>
        <position position="888"/>
    </location>
</feature>
<feature type="strand" evidence="8">
    <location>
        <begin position="442"/>
        <end position="447"/>
    </location>
</feature>
<feature type="strand" evidence="8">
    <location>
        <begin position="450"/>
        <end position="459"/>
    </location>
</feature>
<feature type="strand" evidence="8">
    <location>
        <begin position="470"/>
        <end position="474"/>
    </location>
</feature>
<feature type="strand" evidence="8">
    <location>
        <begin position="476"/>
        <end position="479"/>
    </location>
</feature>
<feature type="helix" evidence="8">
    <location>
        <begin position="480"/>
        <end position="489"/>
    </location>
</feature>
<feature type="strand" evidence="8">
    <location>
        <begin position="491"/>
        <end position="502"/>
    </location>
</feature>
<feature type="helix" evidence="8">
    <location>
        <begin position="503"/>
        <end position="505"/>
    </location>
</feature>
<feature type="helix" evidence="8">
    <location>
        <begin position="506"/>
        <end position="517"/>
    </location>
</feature>
<feature type="turn" evidence="8">
    <location>
        <begin position="518"/>
        <end position="520"/>
    </location>
</feature>
<feature type="strand" evidence="8">
    <location>
        <begin position="521"/>
        <end position="526"/>
    </location>
</feature>
<feature type="strand" evidence="8">
    <location>
        <begin position="532"/>
        <end position="536"/>
    </location>
</feature>
<feature type="helix" evidence="8">
    <location>
        <begin position="541"/>
        <end position="544"/>
    </location>
</feature>
<feature type="strand" evidence="8">
    <location>
        <begin position="552"/>
        <end position="560"/>
    </location>
</feature>
<name>FPA_ARATH</name>
<sequence>MALSMKPFRADDSGFQSNNLWVGSLTPETTESDLTELFGRYGDIDRITVYSSRGFAFIYYRHVEEAVAAKEALQGANLNGSQIKIEYARPAKPCKSLWVGGIGPNVSKDDLEEEFSKFGKIEDFRFLRERKTAFIDYYEMDDALQAKSMNGKPMGGSFLRVDFLRSQAPKKEQWAGSYDNRNGNMNHKPQYPHSYEDFKGDVQPSKVLWIGFPPTATQCNDEQILHNAMILFGEIERVKSYPSRNFALVEFRSAEEARQCKEGLQGRLFNNPRIKIMYSNDELPPEQDDTSFYSGMKRSRTDMFNNDPSFVSSPHSTGIPGSMRPLRGTNERSYNGAEYNDVVGKEPNWRRPSANGTGILPSPTGPGILPSPAQGTRRPMRSNPDSWEGYDPAQLVRESKRTRRDGSVDGFTPMGVDERSFGRGSVAARPIRGPPDSDHIWRGMIAKGGTPVCCARCVPMGKGIETKLPEVVNCSARTDLNMLAKHYAVAIGCEIVFFVPDREEDFASYTEFLRYLSSKDRAGVAKLDDGTTLFLVPPSDFLTDVLQVTRQERLYGVVLKLPPPAVPVTASYRQESQSNPLHYMDQARDSPANASHSLYPPRENYIRGAPEHLTAASKPSVSEPLRIPNNAAPQAGVSLTPELLATLASILPATSQPAAPESHQPMSGPSTVVSTAHQSNGLYNGEAPSQAWKRGPQTVHDASNQSFQQYGNQYTPAGQLPPPPSRYPPASNNPNYTSGMVHGNMQYQSQSVNMPQLSPLPNMPHNNYSMYTQGSSNHPVSQPMVQQYQPEASMPNQNYGPIPSYQQANFHGVTTNQAQNLNPSQFQAAMQPPADKANLEPQNQALRLQPMISGDGQGTTDGEVDKNQRYQSTLQFAANLLLQIQQKQQQQSSGTPAGQGP</sequence>
<protein>
    <recommendedName>
        <fullName>Flowering time control protein FPA</fullName>
    </recommendedName>
</protein>
<gene>
    <name type="primary">FPA</name>
    <name type="ordered locus">At2g43410</name>
    <name type="ORF">T1O24.15</name>
</gene>
<accession>Q8LPQ9</accession>
<accession>A8MQX1</accession>
<accession>B9DG59</accession>
<accession>C0Z2L9</accession>
<accession>O22855</accession>
<accession>Q58T22</accession>
<organism>
    <name type="scientific">Arabidopsis thaliana</name>
    <name type="common">Mouse-ear cress</name>
    <dbReference type="NCBI Taxonomy" id="3702"/>
    <lineage>
        <taxon>Eukaryota</taxon>
        <taxon>Viridiplantae</taxon>
        <taxon>Streptophyta</taxon>
        <taxon>Embryophyta</taxon>
        <taxon>Tracheophyta</taxon>
        <taxon>Spermatophyta</taxon>
        <taxon>Magnoliopsida</taxon>
        <taxon>eudicotyledons</taxon>
        <taxon>Gunneridae</taxon>
        <taxon>Pentapetalae</taxon>
        <taxon>rosids</taxon>
        <taxon>malvids</taxon>
        <taxon>Brassicales</taxon>
        <taxon>Brassicaceae</taxon>
        <taxon>Camelineae</taxon>
        <taxon>Arabidopsis</taxon>
    </lineage>
</organism>
<comment type="function">
    <text evidence="3 4 5">Plays a role in the regulation of flowering time in the autonomous flowering pathway by decreasing FLOWERING LOCUS C mRNA levels. Required for RNA-mediated chromatin silencing of a range of loci in the genome. Cotranscriptionally recognizes aberrant RNA and marks it for silencing. Controls alternative cleavage and polyadenylation on pre-mRNAs and antisense RNAs. Acts redundantly with FCA to prevent the expression of distally polyadenylated antisense RNAs at the FLC locus.</text>
</comment>
<comment type="subcellular location">
    <subcellularLocation>
        <location evidence="4">Nucleus</location>
    </subcellularLocation>
</comment>
<comment type="alternative products">
    <event type="alternative splicing"/>
    <isoform>
        <id>Q8LPQ9-1</id>
        <name>1</name>
        <sequence type="displayed"/>
    </isoform>
    <isoform>
        <id>Q8LPQ9-2</id>
        <name>2</name>
        <sequence type="described" ref="VSP_038751"/>
    </isoform>
    <isoform>
        <id>Q8LPQ9-3</id>
        <name>3</name>
        <sequence type="described" ref="VSP_038750 VSP_038752"/>
    </isoform>
</comment>
<comment type="tissue specificity">
    <text evidence="3">Expressed in roots, leaves, stems and flowers. Highest expression in flower stems and meristematic regions.</text>
</comment>
<comment type="developmental stage">
    <text evidence="3">Expressed throughout the plant life cycle.</text>
</comment>
<comment type="induction">
    <text evidence="5">Negative feedback mediated by FPA itself.</text>
</comment>
<comment type="disruption phenotype">
    <text evidence="3">Late flowering.</text>
</comment>
<comment type="miscellaneous">
    <text>While FCA requires both FY and FLD, FPA requires FLD but not FY to repress FLC.</text>
</comment>
<comment type="similarity">
    <text evidence="7">Belongs to the RRM Spen family.</text>
</comment>
<comment type="sequence caution" evidence="7">
    <conflict type="erroneous gene model prediction">
        <sequence resource="EMBL-CDS" id="AAB64314"/>
    </conflict>
</comment>
<comment type="sequence caution" evidence="7">
    <conflict type="erroneous gene model prediction">
        <sequence resource="EMBL-CDS" id="AAX51263"/>
    </conflict>
</comment>
<reference key="1">
    <citation type="journal article" date="2001" name="Plant Cell">
        <title>FPA, a gene involved in floral induction in Arabidopsis, encodes a protein containing RNA-recognition motifs.</title>
        <authorList>
            <person name="Schomburg F.M."/>
            <person name="Patton D.A."/>
            <person name="Meinke D.W."/>
            <person name="Amasino R.M."/>
        </authorList>
    </citation>
    <scope>NUCLEOTIDE SEQUENCE [MRNA] (ISOFORM 1)</scope>
    <scope>FUNCTION</scope>
    <scope>TISSUE SPECIFICITY</scope>
    <scope>DEVELOPMENTAL STAGE</scope>
    <scope>DISRUPTION PHENOTYPE</scope>
</reference>
<reference key="2">
    <citation type="journal article" date="2005" name="Genetics">
        <title>FRIGIDA-independent variation in flowering time of natural Arabidopsis thaliana accessions.</title>
        <authorList>
            <person name="Werner J.D."/>
            <person name="Borevitz J.O."/>
            <person name="Uhlenhaut N.H."/>
            <person name="Ecker J.R."/>
            <person name="Chory J."/>
            <person name="Weigel D."/>
        </authorList>
    </citation>
    <scope>NUCLEOTIDE SEQUENCE [GENOMIC DNA]</scope>
    <source>
        <strain>cv. Lz-0</strain>
    </source>
</reference>
<reference key="3">
    <citation type="journal article" date="1999" name="Nature">
        <title>Sequence and analysis of chromosome 2 of the plant Arabidopsis thaliana.</title>
        <authorList>
            <person name="Lin X."/>
            <person name="Kaul S."/>
            <person name="Rounsley S.D."/>
            <person name="Shea T.P."/>
            <person name="Benito M.-I."/>
            <person name="Town C.D."/>
            <person name="Fujii C.Y."/>
            <person name="Mason T.M."/>
            <person name="Bowman C.L."/>
            <person name="Barnstead M.E."/>
            <person name="Feldblyum T.V."/>
            <person name="Buell C.R."/>
            <person name="Ketchum K.A."/>
            <person name="Lee J.J."/>
            <person name="Ronning C.M."/>
            <person name="Koo H.L."/>
            <person name="Moffat K.S."/>
            <person name="Cronin L.A."/>
            <person name="Shen M."/>
            <person name="Pai G."/>
            <person name="Van Aken S."/>
            <person name="Umayam L."/>
            <person name="Tallon L.J."/>
            <person name="Gill J.E."/>
            <person name="Adams M.D."/>
            <person name="Carrera A.J."/>
            <person name="Creasy T.H."/>
            <person name="Goodman H.M."/>
            <person name="Somerville C.R."/>
            <person name="Copenhaver G.P."/>
            <person name="Preuss D."/>
            <person name="Nierman W.C."/>
            <person name="White O."/>
            <person name="Eisen J.A."/>
            <person name="Salzberg S.L."/>
            <person name="Fraser C.M."/>
            <person name="Venter J.C."/>
        </authorList>
    </citation>
    <scope>NUCLEOTIDE SEQUENCE [LARGE SCALE GENOMIC DNA]</scope>
    <source>
        <strain>cv. Columbia</strain>
    </source>
</reference>
<reference key="4">
    <citation type="journal article" date="2017" name="Plant J.">
        <title>Araport11: a complete reannotation of the Arabidopsis thaliana reference genome.</title>
        <authorList>
            <person name="Cheng C.Y."/>
            <person name="Krishnakumar V."/>
            <person name="Chan A.P."/>
            <person name="Thibaud-Nissen F."/>
            <person name="Schobel S."/>
            <person name="Town C.D."/>
        </authorList>
    </citation>
    <scope>GENOME REANNOTATION</scope>
    <source>
        <strain>cv. Columbia</strain>
    </source>
</reference>
<reference key="5">
    <citation type="journal article" date="2003" name="Science">
        <title>Empirical analysis of transcriptional activity in the Arabidopsis genome.</title>
        <authorList>
            <person name="Yamada K."/>
            <person name="Lim J."/>
            <person name="Dale J.M."/>
            <person name="Chen H."/>
            <person name="Shinn P."/>
            <person name="Palm C.J."/>
            <person name="Southwick A.M."/>
            <person name="Wu H.C."/>
            <person name="Kim C.J."/>
            <person name="Nguyen M."/>
            <person name="Pham P.K."/>
            <person name="Cheuk R.F."/>
            <person name="Karlin-Newmann G."/>
            <person name="Liu S.X."/>
            <person name="Lam B."/>
            <person name="Sakano H."/>
            <person name="Wu T."/>
            <person name="Yu G."/>
            <person name="Miranda M."/>
            <person name="Quach H.L."/>
            <person name="Tripp M."/>
            <person name="Chang C.H."/>
            <person name="Lee J.M."/>
            <person name="Toriumi M.J."/>
            <person name="Chan M.M."/>
            <person name="Tang C.C."/>
            <person name="Onodera C.S."/>
            <person name="Deng J.M."/>
            <person name="Akiyama K."/>
            <person name="Ansari Y."/>
            <person name="Arakawa T."/>
            <person name="Banh J."/>
            <person name="Banno F."/>
            <person name="Bowser L."/>
            <person name="Brooks S.Y."/>
            <person name="Carninci P."/>
            <person name="Chao Q."/>
            <person name="Choy N."/>
            <person name="Enju A."/>
            <person name="Goldsmith A.D."/>
            <person name="Gurjal M."/>
            <person name="Hansen N.F."/>
            <person name="Hayashizaki Y."/>
            <person name="Johnson-Hopson C."/>
            <person name="Hsuan V.W."/>
            <person name="Iida K."/>
            <person name="Karnes M."/>
            <person name="Khan S."/>
            <person name="Koesema E."/>
            <person name="Ishida J."/>
            <person name="Jiang P.X."/>
            <person name="Jones T."/>
            <person name="Kawai J."/>
            <person name="Kamiya A."/>
            <person name="Meyers C."/>
            <person name="Nakajima M."/>
            <person name="Narusaka M."/>
            <person name="Seki M."/>
            <person name="Sakurai T."/>
            <person name="Satou M."/>
            <person name="Tamse R."/>
            <person name="Vaysberg M."/>
            <person name="Wallender E.K."/>
            <person name="Wong C."/>
            <person name="Yamamura Y."/>
            <person name="Yuan S."/>
            <person name="Shinozaki K."/>
            <person name="Davis R.W."/>
            <person name="Theologis A."/>
            <person name="Ecker J.R."/>
        </authorList>
    </citation>
    <scope>NUCLEOTIDE SEQUENCE [LARGE SCALE MRNA] (ISOFORM 1)</scope>
    <source>
        <strain>cv. Columbia</strain>
    </source>
</reference>
<reference key="6">
    <citation type="journal article" date="2009" name="DNA Res.">
        <title>Analysis of multiple occurrences of alternative splicing events in Arabidopsis thaliana using novel sequenced full-length cDNAs.</title>
        <authorList>
            <person name="Iida K."/>
            <person name="Fukami-Kobayashi K."/>
            <person name="Toyoda A."/>
            <person name="Sakaki Y."/>
            <person name="Kobayashi M."/>
            <person name="Seki M."/>
            <person name="Shinozaki K."/>
        </authorList>
    </citation>
    <scope>NUCLEOTIDE SEQUENCE [LARGE SCALE MRNA] (ISOFORMS 1 AND 3)</scope>
    <source>
        <strain>cv. Columbia</strain>
    </source>
</reference>
<reference key="7">
    <citation type="journal article" date="2007" name="Science">
        <title>Widespread role for the flowering-time regulators FCA and FPA in RNA-mediated chromatin silencing.</title>
        <authorList>
            <person name="Baurle I."/>
            <person name="Smith L."/>
            <person name="Baulcombe D.C."/>
            <person name="Dean C."/>
        </authorList>
    </citation>
    <scope>FUNCTION</scope>
    <scope>SUBCELLULAR LOCATION</scope>
</reference>
<reference key="8">
    <citation type="journal article" date="2010" name="Dev. Cell">
        <title>The spen family protein FPA controls alternative cleavage and polyadenylation of RNA.</title>
        <authorList>
            <person name="Hornyik C."/>
            <person name="Terzi L.C."/>
            <person name="Simpson G.G."/>
        </authorList>
    </citation>
    <scope>FUNCTION</scope>
    <scope>INDUCTION</scope>
</reference>
<keyword id="KW-0002">3D-structure</keyword>
<keyword id="KW-0025">Alternative splicing</keyword>
<keyword id="KW-0217">Developmental protein</keyword>
<keyword id="KW-0221">Differentiation</keyword>
<keyword id="KW-0287">Flowering</keyword>
<keyword id="KW-0539">Nucleus</keyword>
<keyword id="KW-1185">Reference proteome</keyword>
<keyword id="KW-0677">Repeat</keyword>
<keyword id="KW-0694">RNA-binding</keyword>
<keyword id="KW-0804">Transcription</keyword>
<keyword id="KW-0805">Transcription regulation</keyword>
<proteinExistence type="evidence at protein level"/>
<evidence type="ECO:0000255" key="1">
    <source>
        <dbReference type="PROSITE-ProRule" id="PRU00176"/>
    </source>
</evidence>
<evidence type="ECO:0000256" key="2">
    <source>
        <dbReference type="SAM" id="MobiDB-lite"/>
    </source>
</evidence>
<evidence type="ECO:0000269" key="3">
    <source>
    </source>
</evidence>
<evidence type="ECO:0000269" key="4">
    <source>
    </source>
</evidence>
<evidence type="ECO:0000269" key="5">
    <source>
    </source>
</evidence>
<evidence type="ECO:0000303" key="6">
    <source>
    </source>
</evidence>
<evidence type="ECO:0000305" key="7"/>
<evidence type="ECO:0007829" key="8">
    <source>
        <dbReference type="PDB" id="5KXF"/>
    </source>
</evidence>